<evidence type="ECO:0000255" key="1">
    <source>
        <dbReference type="HAMAP-Rule" id="MF_00456"/>
    </source>
</evidence>
<evidence type="ECO:0000305" key="2"/>
<accession>Q896G3</accession>
<reference key="1">
    <citation type="journal article" date="2003" name="Proc. Natl. Acad. Sci. U.S.A.">
        <title>The genome sequence of Clostridium tetani, the causative agent of tetanus disease.</title>
        <authorList>
            <person name="Brueggemann H."/>
            <person name="Baeumer S."/>
            <person name="Fricke W.F."/>
            <person name="Wiezer A."/>
            <person name="Liesegang H."/>
            <person name="Decker I."/>
            <person name="Herzberg C."/>
            <person name="Martinez-Arias R."/>
            <person name="Merkl R."/>
            <person name="Henne A."/>
            <person name="Gottschalk G."/>
        </authorList>
    </citation>
    <scope>NUCLEOTIDE SEQUENCE [LARGE SCALE GENOMIC DNA]</scope>
    <source>
        <strain>Massachusetts / E88</strain>
    </source>
</reference>
<gene>
    <name evidence="1" type="primary">proB</name>
    <name type="ordered locus">CTC_01044</name>
</gene>
<proteinExistence type="inferred from homology"/>
<organism>
    <name type="scientific">Clostridium tetani (strain Massachusetts / E88)</name>
    <dbReference type="NCBI Taxonomy" id="212717"/>
    <lineage>
        <taxon>Bacteria</taxon>
        <taxon>Bacillati</taxon>
        <taxon>Bacillota</taxon>
        <taxon>Clostridia</taxon>
        <taxon>Eubacteriales</taxon>
        <taxon>Clostridiaceae</taxon>
        <taxon>Clostridium</taxon>
    </lineage>
</organism>
<feature type="chain" id="PRO_0000109662" description="Glutamate 5-kinase">
    <location>
        <begin position="1"/>
        <end position="267"/>
    </location>
</feature>
<feature type="binding site" evidence="1">
    <location>
        <position position="18"/>
    </location>
    <ligand>
        <name>ATP</name>
        <dbReference type="ChEBI" id="CHEBI:30616"/>
    </ligand>
</feature>
<feature type="binding site" evidence="1">
    <location>
        <position position="58"/>
    </location>
    <ligand>
        <name>substrate</name>
    </ligand>
</feature>
<feature type="binding site" evidence="1">
    <location>
        <position position="145"/>
    </location>
    <ligand>
        <name>substrate</name>
    </ligand>
</feature>
<feature type="binding site" evidence="1">
    <location>
        <position position="157"/>
    </location>
    <ligand>
        <name>substrate</name>
    </ligand>
</feature>
<feature type="binding site" evidence="1">
    <location>
        <begin position="177"/>
        <end position="178"/>
    </location>
    <ligand>
        <name>ATP</name>
        <dbReference type="ChEBI" id="CHEBI:30616"/>
    </ligand>
</feature>
<feature type="binding site" evidence="1">
    <location>
        <begin position="219"/>
        <end position="225"/>
    </location>
    <ligand>
        <name>ATP</name>
        <dbReference type="ChEBI" id="CHEBI:30616"/>
    </ligand>
</feature>
<keyword id="KW-0028">Amino-acid biosynthesis</keyword>
<keyword id="KW-0067">ATP-binding</keyword>
<keyword id="KW-0963">Cytoplasm</keyword>
<keyword id="KW-0418">Kinase</keyword>
<keyword id="KW-0547">Nucleotide-binding</keyword>
<keyword id="KW-0641">Proline biosynthesis</keyword>
<keyword id="KW-1185">Reference proteome</keyword>
<keyword id="KW-0808">Transferase</keyword>
<dbReference type="EC" id="2.7.2.11" evidence="1"/>
<dbReference type="EMBL" id="AE015927">
    <property type="protein sequence ID" value="AAO35627.1"/>
    <property type="status" value="ALT_INIT"/>
    <property type="molecule type" value="Genomic_DNA"/>
</dbReference>
<dbReference type="RefSeq" id="WP_035110487.1">
    <property type="nucleotide sequence ID" value="NC_004557.1"/>
</dbReference>
<dbReference type="SMR" id="Q896G3"/>
<dbReference type="STRING" id="212717.CTC_01044"/>
<dbReference type="GeneID" id="24255150"/>
<dbReference type="KEGG" id="ctc:CTC_01044"/>
<dbReference type="HOGENOM" id="CLU_025400_0_2_9"/>
<dbReference type="OrthoDB" id="9804434at2"/>
<dbReference type="UniPathway" id="UPA00098">
    <property type="reaction ID" value="UER00359"/>
</dbReference>
<dbReference type="Proteomes" id="UP000001412">
    <property type="component" value="Chromosome"/>
</dbReference>
<dbReference type="GO" id="GO:0005829">
    <property type="term" value="C:cytosol"/>
    <property type="evidence" value="ECO:0007669"/>
    <property type="project" value="TreeGrafter"/>
</dbReference>
<dbReference type="GO" id="GO:0005524">
    <property type="term" value="F:ATP binding"/>
    <property type="evidence" value="ECO:0007669"/>
    <property type="project" value="UniProtKB-KW"/>
</dbReference>
<dbReference type="GO" id="GO:0004349">
    <property type="term" value="F:glutamate 5-kinase activity"/>
    <property type="evidence" value="ECO:0007669"/>
    <property type="project" value="UniProtKB-UniRule"/>
</dbReference>
<dbReference type="GO" id="GO:0055129">
    <property type="term" value="P:L-proline biosynthetic process"/>
    <property type="evidence" value="ECO:0007669"/>
    <property type="project" value="UniProtKB-UniRule"/>
</dbReference>
<dbReference type="CDD" id="cd04242">
    <property type="entry name" value="AAK_G5K_ProB"/>
    <property type="match status" value="1"/>
</dbReference>
<dbReference type="FunFam" id="3.40.1160.10:FF:000018">
    <property type="entry name" value="Glutamate 5-kinase"/>
    <property type="match status" value="1"/>
</dbReference>
<dbReference type="Gene3D" id="3.40.1160.10">
    <property type="entry name" value="Acetylglutamate kinase-like"/>
    <property type="match status" value="1"/>
</dbReference>
<dbReference type="HAMAP" id="MF_00456">
    <property type="entry name" value="ProB"/>
    <property type="match status" value="1"/>
</dbReference>
<dbReference type="InterPro" id="IPR036393">
    <property type="entry name" value="AceGlu_kinase-like_sf"/>
</dbReference>
<dbReference type="InterPro" id="IPR001048">
    <property type="entry name" value="Asp/Glu/Uridylate_kinase"/>
</dbReference>
<dbReference type="InterPro" id="IPR041739">
    <property type="entry name" value="G5K_ProB"/>
</dbReference>
<dbReference type="InterPro" id="IPR001057">
    <property type="entry name" value="Glu/AcGlu_kinase"/>
</dbReference>
<dbReference type="InterPro" id="IPR011529">
    <property type="entry name" value="Glu_5kinase"/>
</dbReference>
<dbReference type="InterPro" id="IPR005715">
    <property type="entry name" value="Glu_5kinase/COase_Synthase"/>
</dbReference>
<dbReference type="InterPro" id="IPR019797">
    <property type="entry name" value="Glutamate_5-kinase_CS"/>
</dbReference>
<dbReference type="NCBIfam" id="TIGR01027">
    <property type="entry name" value="proB"/>
    <property type="match status" value="1"/>
</dbReference>
<dbReference type="PANTHER" id="PTHR43654">
    <property type="entry name" value="GLUTAMATE 5-KINASE"/>
    <property type="match status" value="1"/>
</dbReference>
<dbReference type="PANTHER" id="PTHR43654:SF1">
    <property type="entry name" value="ISOPENTENYL PHOSPHATE KINASE"/>
    <property type="match status" value="1"/>
</dbReference>
<dbReference type="Pfam" id="PF00696">
    <property type="entry name" value="AA_kinase"/>
    <property type="match status" value="1"/>
</dbReference>
<dbReference type="PIRSF" id="PIRSF000729">
    <property type="entry name" value="GK"/>
    <property type="match status" value="1"/>
</dbReference>
<dbReference type="PRINTS" id="PR00474">
    <property type="entry name" value="GLU5KINASE"/>
</dbReference>
<dbReference type="SUPFAM" id="SSF53633">
    <property type="entry name" value="Carbamate kinase-like"/>
    <property type="match status" value="1"/>
</dbReference>
<dbReference type="PROSITE" id="PS00902">
    <property type="entry name" value="GLUTAMATE_5_KINASE"/>
    <property type="match status" value="1"/>
</dbReference>
<sequence>MQFNRKEYLKDVKNIVVKVGSSTLTYENGLLNLFHIEHLVRQLVDLHNRGYNVILVSSGAIGAGVGKLGLSEKPKSIPEKQAAAAVGQGILLHTYEKIFAEYGKTIGQILLTKEDMIDEVRSCNATNTFNALLDKRVIPIINENDAVVVDEIKVGDNDTLSAFVSKLVKADLLILMSDIEGLYSCDPRINNDAELINFVEKITKDIISCAGGAGTDLGTGGMATKIKAAKIATSAGIPMLIVNGATNEVLQDVVEGKSVGTWFNAIK</sequence>
<comment type="function">
    <text evidence="1">Catalyzes the transfer of a phosphate group to glutamate to form L-glutamate 5-phosphate.</text>
</comment>
<comment type="catalytic activity">
    <reaction evidence="1">
        <text>L-glutamate + ATP = L-glutamyl 5-phosphate + ADP</text>
        <dbReference type="Rhea" id="RHEA:14877"/>
        <dbReference type="ChEBI" id="CHEBI:29985"/>
        <dbReference type="ChEBI" id="CHEBI:30616"/>
        <dbReference type="ChEBI" id="CHEBI:58274"/>
        <dbReference type="ChEBI" id="CHEBI:456216"/>
        <dbReference type="EC" id="2.7.2.11"/>
    </reaction>
</comment>
<comment type="pathway">
    <text evidence="1">Amino-acid biosynthesis; L-proline biosynthesis; L-glutamate 5-semialdehyde from L-glutamate: step 1/2.</text>
</comment>
<comment type="subcellular location">
    <subcellularLocation>
        <location evidence="1">Cytoplasm</location>
    </subcellularLocation>
</comment>
<comment type="similarity">
    <text evidence="1">Belongs to the glutamate 5-kinase family.</text>
</comment>
<comment type="sequence caution" evidence="2">
    <conflict type="erroneous initiation">
        <sequence resource="EMBL-CDS" id="AAO35627"/>
    </conflict>
</comment>
<name>PROB_CLOTE</name>
<protein>
    <recommendedName>
        <fullName evidence="1">Glutamate 5-kinase</fullName>
        <ecNumber evidence="1">2.7.2.11</ecNumber>
    </recommendedName>
    <alternativeName>
        <fullName evidence="1">Gamma-glutamyl kinase</fullName>
        <shortName evidence="1">GK</shortName>
    </alternativeName>
</protein>